<reference key="1">
    <citation type="submission" date="2007-05" db="EMBL/GenBank/DDBJ databases">
        <title>Complete sequence of Thermotoga petrophila RKU-1.</title>
        <authorList>
            <consortium name="US DOE Joint Genome Institute"/>
            <person name="Copeland A."/>
            <person name="Lucas S."/>
            <person name="Lapidus A."/>
            <person name="Barry K."/>
            <person name="Glavina del Rio T."/>
            <person name="Dalin E."/>
            <person name="Tice H."/>
            <person name="Pitluck S."/>
            <person name="Sims D."/>
            <person name="Brettin T."/>
            <person name="Bruce D."/>
            <person name="Detter J.C."/>
            <person name="Han C."/>
            <person name="Tapia R."/>
            <person name="Schmutz J."/>
            <person name="Larimer F."/>
            <person name="Land M."/>
            <person name="Hauser L."/>
            <person name="Kyrpides N."/>
            <person name="Mikhailova N."/>
            <person name="Nelson K."/>
            <person name="Gogarten J.P."/>
            <person name="Noll K."/>
            <person name="Richardson P."/>
        </authorList>
    </citation>
    <scope>NUCLEOTIDE SEQUENCE [LARGE SCALE GENOMIC DNA]</scope>
    <source>
        <strain>ATCC BAA-488 / DSM 13995 / JCM 10881 / RKU-1</strain>
    </source>
</reference>
<protein>
    <recommendedName>
        <fullName evidence="1">Uronate isomerase</fullName>
        <ecNumber evidence="1">5.3.1.12</ecNumber>
    </recommendedName>
    <alternativeName>
        <fullName evidence="1">Glucuronate isomerase</fullName>
    </alternativeName>
    <alternativeName>
        <fullName evidence="1">Uronic isomerase</fullName>
    </alternativeName>
</protein>
<comment type="catalytic activity">
    <reaction evidence="1">
        <text>D-glucuronate = D-fructuronate</text>
        <dbReference type="Rhea" id="RHEA:13049"/>
        <dbReference type="ChEBI" id="CHEBI:58720"/>
        <dbReference type="ChEBI" id="CHEBI:59863"/>
        <dbReference type="EC" id="5.3.1.12"/>
    </reaction>
</comment>
<comment type="catalytic activity">
    <reaction evidence="1">
        <text>aldehydo-D-galacturonate = keto-D-tagaturonate</text>
        <dbReference type="Rhea" id="RHEA:27702"/>
        <dbReference type="ChEBI" id="CHEBI:12952"/>
        <dbReference type="ChEBI" id="CHEBI:17886"/>
        <dbReference type="EC" id="5.3.1.12"/>
    </reaction>
</comment>
<comment type="pathway">
    <text evidence="1">Carbohydrate metabolism; pentose and glucuronate interconversion.</text>
</comment>
<comment type="similarity">
    <text evidence="1">Belongs to the metallo-dependent hydrolases superfamily. Uronate isomerase family.</text>
</comment>
<organism>
    <name type="scientific">Thermotoga petrophila (strain ATCC BAA-488 / DSM 13995 / JCM 10881 / RKU-1)</name>
    <dbReference type="NCBI Taxonomy" id="390874"/>
    <lineage>
        <taxon>Bacteria</taxon>
        <taxon>Thermotogati</taxon>
        <taxon>Thermotogota</taxon>
        <taxon>Thermotogae</taxon>
        <taxon>Thermotogales</taxon>
        <taxon>Thermotogaceae</taxon>
        <taxon>Thermotoga</taxon>
    </lineage>
</organism>
<feature type="chain" id="PRO_1000044781" description="Uronate isomerase">
    <location>
        <begin position="1"/>
        <end position="451"/>
    </location>
</feature>
<sequence length="451" mass="52339">MFLGEDYLLTNRAAVRLFNEVKDLPIVDPHNHLDAKDIVENKPWSDIWEVEGATDHYVWELMRRCGISEEYITGSRSNKEKWLALAKVFPRFVGNPTYEWIHLDLWRRFNIKKVISEETAEEIWEETKKKLPEMTPQKLLRDMKVEILCTTDDPVSTLEHHRKAKEVVEGVTILPTWRPDRAMNVDKEGWKEYVEKMGERYGEDTSTLEGFLSALWKSHEHFKEHGCVASDHALLEPSIYYVDENRARAIHEKAFSGEKLTQDEINDYKAFMMMQFGRMNQETNWVTQLHIGALRDYRDSLFKTLGPDSGGDISTNFLRIAEGLRYFLNEFDGKLKIVLYVLDPTHLPTVATIARAFPNVYVGAPWWFNDSPFGMEMHLKYLASVDLLYNLAGMVTDSRKLLSFGSRTEMFRRVLSSVVGEMVERGQIPIKEARELVKHVSYDGPKALFFG</sequence>
<accession>A5IL06</accession>
<evidence type="ECO:0000255" key="1">
    <source>
        <dbReference type="HAMAP-Rule" id="MF_00675"/>
    </source>
</evidence>
<dbReference type="EC" id="5.3.1.12" evidence="1"/>
<dbReference type="EMBL" id="CP000702">
    <property type="protein sequence ID" value="ABQ46879.1"/>
    <property type="molecule type" value="Genomic_DNA"/>
</dbReference>
<dbReference type="RefSeq" id="WP_011943444.1">
    <property type="nucleotide sequence ID" value="NC_009486.1"/>
</dbReference>
<dbReference type="SMR" id="A5IL06"/>
<dbReference type="STRING" id="390874.Tpet_0860"/>
<dbReference type="KEGG" id="tpt:Tpet_0860"/>
<dbReference type="eggNOG" id="COG1904">
    <property type="taxonomic scope" value="Bacteria"/>
</dbReference>
<dbReference type="HOGENOM" id="CLU_044465_1_0_0"/>
<dbReference type="UniPathway" id="UPA00246"/>
<dbReference type="Proteomes" id="UP000006558">
    <property type="component" value="Chromosome"/>
</dbReference>
<dbReference type="GO" id="GO:0008880">
    <property type="term" value="F:glucuronate isomerase activity"/>
    <property type="evidence" value="ECO:0007669"/>
    <property type="project" value="UniProtKB-UniRule"/>
</dbReference>
<dbReference type="GO" id="GO:0019698">
    <property type="term" value="P:D-galacturonate catabolic process"/>
    <property type="evidence" value="ECO:0007669"/>
    <property type="project" value="TreeGrafter"/>
</dbReference>
<dbReference type="GO" id="GO:0042840">
    <property type="term" value="P:D-glucuronate catabolic process"/>
    <property type="evidence" value="ECO:0007669"/>
    <property type="project" value="TreeGrafter"/>
</dbReference>
<dbReference type="Gene3D" id="3.20.20.140">
    <property type="entry name" value="Metal-dependent hydrolases"/>
    <property type="match status" value="1"/>
</dbReference>
<dbReference type="Gene3D" id="1.10.2020.10">
    <property type="entry name" value="uronate isomerase, domain 2, chain A"/>
    <property type="match status" value="1"/>
</dbReference>
<dbReference type="HAMAP" id="MF_00675">
    <property type="entry name" value="UxaC"/>
    <property type="match status" value="1"/>
</dbReference>
<dbReference type="InterPro" id="IPR032466">
    <property type="entry name" value="Metal_Hydrolase"/>
</dbReference>
<dbReference type="InterPro" id="IPR003766">
    <property type="entry name" value="Uronate_isomerase"/>
</dbReference>
<dbReference type="NCBIfam" id="NF002794">
    <property type="entry name" value="PRK02925.1"/>
    <property type="match status" value="1"/>
</dbReference>
<dbReference type="PANTHER" id="PTHR30068">
    <property type="entry name" value="URONATE ISOMERASE"/>
    <property type="match status" value="1"/>
</dbReference>
<dbReference type="PANTHER" id="PTHR30068:SF4">
    <property type="entry name" value="URONATE ISOMERASE"/>
    <property type="match status" value="1"/>
</dbReference>
<dbReference type="Pfam" id="PF02614">
    <property type="entry name" value="UxaC"/>
    <property type="match status" value="1"/>
</dbReference>
<dbReference type="SUPFAM" id="SSF51556">
    <property type="entry name" value="Metallo-dependent hydrolases"/>
    <property type="match status" value="1"/>
</dbReference>
<gene>
    <name evidence="1" type="primary">uxaC</name>
    <name type="ordered locus">Tpet_0860</name>
</gene>
<name>UXAC_THEP1</name>
<keyword id="KW-0413">Isomerase</keyword>
<proteinExistence type="inferred from homology"/>